<comment type="function">
    <text evidence="1">Catalyzes the attachment of proline to tRNA(Pro) in a two-step reaction: proline is first activated by ATP to form Pro-AMP and then transferred to the acceptor end of tRNA(Pro).</text>
</comment>
<comment type="catalytic activity">
    <reaction evidence="1">
        <text>tRNA(Pro) + L-proline + ATP = L-prolyl-tRNA(Pro) + AMP + diphosphate</text>
        <dbReference type="Rhea" id="RHEA:14305"/>
        <dbReference type="Rhea" id="RHEA-COMP:9700"/>
        <dbReference type="Rhea" id="RHEA-COMP:9702"/>
        <dbReference type="ChEBI" id="CHEBI:30616"/>
        <dbReference type="ChEBI" id="CHEBI:33019"/>
        <dbReference type="ChEBI" id="CHEBI:60039"/>
        <dbReference type="ChEBI" id="CHEBI:78442"/>
        <dbReference type="ChEBI" id="CHEBI:78532"/>
        <dbReference type="ChEBI" id="CHEBI:456215"/>
        <dbReference type="EC" id="6.1.1.15"/>
    </reaction>
</comment>
<comment type="subunit">
    <text evidence="1">Homodimer.</text>
</comment>
<comment type="subcellular location">
    <subcellularLocation>
        <location evidence="1">Cytoplasm</location>
    </subcellularLocation>
</comment>
<comment type="similarity">
    <text evidence="1">Belongs to the class-II aminoacyl-tRNA synthetase family. ProS type 2 subfamily.</text>
</comment>
<accession>A4WPJ3</accession>
<gene>
    <name evidence="1" type="primary">proS</name>
    <name type="ordered locus">Rsph17025_0401</name>
</gene>
<sequence length="445" mass="50390">MRLSRYFLPVLKENPSEAQIVSHRFMLRAGMIKQQAAGIYSWLPLGFKALKRVEQIVHEEQIRAGHIPLLMPTLQPADLWRESGRYDDYGEEMLRITDRHKRDMLYGPTNEEMITDIFRSHVNSYKDLPLTLYHVQWKFRDEIRPRFGVMRGREFLMKDGYNFDLDFDSAIHAYNRHMVSYLRTYERMGLQAIPMRAASGPIGGDNTHEFLVLASTGESEVFYDAAITDLKFGDRVVDYDSREECEAIVKEWTTPYARTDETHDEAIFNAIPEERRRTSRGIEVGQIFYFGTKYSEPMGATVVTADGARVPVHMGSHGIGVSRLLGAIIEASHDDKGIIWPEGVTPFHVGIVNLKQGDSSTDLACEALYRDLSAKGLEPLYDDRDERAGAKFATMDLIGLPWRITVGPRGIAAGKVELTNRRTGESEEMSSGAAVDRLAQIYAGI</sequence>
<reference key="1">
    <citation type="submission" date="2007-04" db="EMBL/GenBank/DDBJ databases">
        <title>Complete sequence of chromosome of Rhodobacter sphaeroides ATCC 17025.</title>
        <authorList>
            <consortium name="US DOE Joint Genome Institute"/>
            <person name="Copeland A."/>
            <person name="Lucas S."/>
            <person name="Lapidus A."/>
            <person name="Barry K."/>
            <person name="Detter J.C."/>
            <person name="Glavina del Rio T."/>
            <person name="Hammon N."/>
            <person name="Israni S."/>
            <person name="Dalin E."/>
            <person name="Tice H."/>
            <person name="Pitluck S."/>
            <person name="Chertkov O."/>
            <person name="Brettin T."/>
            <person name="Bruce D."/>
            <person name="Han C."/>
            <person name="Schmutz J."/>
            <person name="Larimer F."/>
            <person name="Land M."/>
            <person name="Hauser L."/>
            <person name="Kyrpides N."/>
            <person name="Kim E."/>
            <person name="Richardson P."/>
            <person name="Mackenzie C."/>
            <person name="Choudhary M."/>
            <person name="Donohue T.J."/>
            <person name="Kaplan S."/>
        </authorList>
    </citation>
    <scope>NUCLEOTIDE SEQUENCE [LARGE SCALE GENOMIC DNA]</scope>
    <source>
        <strain>ATCC 17025 / ATH 2.4.3</strain>
    </source>
</reference>
<feature type="chain" id="PRO_1000069182" description="Proline--tRNA ligase">
    <location>
        <begin position="1"/>
        <end position="445"/>
    </location>
</feature>
<proteinExistence type="inferred from homology"/>
<keyword id="KW-0030">Aminoacyl-tRNA synthetase</keyword>
<keyword id="KW-0067">ATP-binding</keyword>
<keyword id="KW-0963">Cytoplasm</keyword>
<keyword id="KW-0436">Ligase</keyword>
<keyword id="KW-0547">Nucleotide-binding</keyword>
<keyword id="KW-0648">Protein biosynthesis</keyword>
<evidence type="ECO:0000255" key="1">
    <source>
        <dbReference type="HAMAP-Rule" id="MF_01570"/>
    </source>
</evidence>
<dbReference type="EC" id="6.1.1.15" evidence="1"/>
<dbReference type="EMBL" id="CP000661">
    <property type="protein sequence ID" value="ABP69307.1"/>
    <property type="molecule type" value="Genomic_DNA"/>
</dbReference>
<dbReference type="SMR" id="A4WPJ3"/>
<dbReference type="STRING" id="349102.Rsph17025_0401"/>
<dbReference type="KEGG" id="rsq:Rsph17025_0401"/>
<dbReference type="eggNOG" id="COG0442">
    <property type="taxonomic scope" value="Bacteria"/>
</dbReference>
<dbReference type="HOGENOM" id="CLU_016739_4_2_5"/>
<dbReference type="BioCyc" id="RSPH349102:G1G8M-408-MONOMER"/>
<dbReference type="GO" id="GO:0005829">
    <property type="term" value="C:cytosol"/>
    <property type="evidence" value="ECO:0007669"/>
    <property type="project" value="TreeGrafter"/>
</dbReference>
<dbReference type="GO" id="GO:0005524">
    <property type="term" value="F:ATP binding"/>
    <property type="evidence" value="ECO:0007669"/>
    <property type="project" value="UniProtKB-UniRule"/>
</dbReference>
<dbReference type="GO" id="GO:0004827">
    <property type="term" value="F:proline-tRNA ligase activity"/>
    <property type="evidence" value="ECO:0007669"/>
    <property type="project" value="UniProtKB-UniRule"/>
</dbReference>
<dbReference type="GO" id="GO:0006433">
    <property type="term" value="P:prolyl-tRNA aminoacylation"/>
    <property type="evidence" value="ECO:0007669"/>
    <property type="project" value="UniProtKB-UniRule"/>
</dbReference>
<dbReference type="CDD" id="cd00861">
    <property type="entry name" value="ProRS_anticodon_short"/>
    <property type="match status" value="1"/>
</dbReference>
<dbReference type="CDD" id="cd00779">
    <property type="entry name" value="ProRS_core_prok"/>
    <property type="match status" value="1"/>
</dbReference>
<dbReference type="FunFam" id="3.30.930.10:FF:000042">
    <property type="entry name" value="probable proline--tRNA ligase, mitochondrial"/>
    <property type="match status" value="1"/>
</dbReference>
<dbReference type="FunFam" id="3.40.50.800:FF:000032">
    <property type="entry name" value="Proline--tRNA ligase"/>
    <property type="match status" value="1"/>
</dbReference>
<dbReference type="Gene3D" id="3.40.50.800">
    <property type="entry name" value="Anticodon-binding domain"/>
    <property type="match status" value="1"/>
</dbReference>
<dbReference type="Gene3D" id="3.30.930.10">
    <property type="entry name" value="Bira Bifunctional Protein, Domain 2"/>
    <property type="match status" value="1"/>
</dbReference>
<dbReference type="HAMAP" id="MF_01570">
    <property type="entry name" value="Pro_tRNA_synth_type2"/>
    <property type="match status" value="1"/>
</dbReference>
<dbReference type="InterPro" id="IPR002314">
    <property type="entry name" value="aa-tRNA-synt_IIb"/>
</dbReference>
<dbReference type="InterPro" id="IPR006195">
    <property type="entry name" value="aa-tRNA-synth_II"/>
</dbReference>
<dbReference type="InterPro" id="IPR045864">
    <property type="entry name" value="aa-tRNA-synth_II/BPL/LPL"/>
</dbReference>
<dbReference type="InterPro" id="IPR004154">
    <property type="entry name" value="Anticodon-bd"/>
</dbReference>
<dbReference type="InterPro" id="IPR036621">
    <property type="entry name" value="Anticodon-bd_dom_sf"/>
</dbReference>
<dbReference type="InterPro" id="IPR002316">
    <property type="entry name" value="Pro-tRNA-ligase_IIa"/>
</dbReference>
<dbReference type="InterPro" id="IPR050062">
    <property type="entry name" value="Pro-tRNA_synthetase"/>
</dbReference>
<dbReference type="InterPro" id="IPR023716">
    <property type="entry name" value="Prolyl-tRNA_ligase_IIa_type2"/>
</dbReference>
<dbReference type="InterPro" id="IPR044140">
    <property type="entry name" value="ProRS_anticodon_short"/>
</dbReference>
<dbReference type="InterPro" id="IPR033730">
    <property type="entry name" value="ProRS_core_prok"/>
</dbReference>
<dbReference type="NCBIfam" id="NF008979">
    <property type="entry name" value="PRK12325.1"/>
    <property type="match status" value="1"/>
</dbReference>
<dbReference type="PANTHER" id="PTHR42753">
    <property type="entry name" value="MITOCHONDRIAL RIBOSOME PROTEIN L39/PROLYL-TRNA LIGASE FAMILY MEMBER"/>
    <property type="match status" value="1"/>
</dbReference>
<dbReference type="PANTHER" id="PTHR42753:SF2">
    <property type="entry name" value="PROLINE--TRNA LIGASE"/>
    <property type="match status" value="1"/>
</dbReference>
<dbReference type="Pfam" id="PF03129">
    <property type="entry name" value="HGTP_anticodon"/>
    <property type="match status" value="1"/>
</dbReference>
<dbReference type="Pfam" id="PF00587">
    <property type="entry name" value="tRNA-synt_2b"/>
    <property type="match status" value="1"/>
</dbReference>
<dbReference type="PRINTS" id="PR01046">
    <property type="entry name" value="TRNASYNTHPRO"/>
</dbReference>
<dbReference type="SUPFAM" id="SSF52954">
    <property type="entry name" value="Class II aaRS ABD-related"/>
    <property type="match status" value="1"/>
</dbReference>
<dbReference type="SUPFAM" id="SSF55681">
    <property type="entry name" value="Class II aaRS and biotin synthetases"/>
    <property type="match status" value="1"/>
</dbReference>
<dbReference type="PROSITE" id="PS50862">
    <property type="entry name" value="AA_TRNA_LIGASE_II"/>
    <property type="match status" value="1"/>
</dbReference>
<organism>
    <name type="scientific">Cereibacter sphaeroides (strain ATCC 17025 / ATH 2.4.3)</name>
    <name type="common">Rhodobacter sphaeroides</name>
    <dbReference type="NCBI Taxonomy" id="349102"/>
    <lineage>
        <taxon>Bacteria</taxon>
        <taxon>Pseudomonadati</taxon>
        <taxon>Pseudomonadota</taxon>
        <taxon>Alphaproteobacteria</taxon>
        <taxon>Rhodobacterales</taxon>
        <taxon>Paracoccaceae</taxon>
        <taxon>Cereibacter</taxon>
    </lineage>
</organism>
<name>SYP_CERS5</name>
<protein>
    <recommendedName>
        <fullName evidence="1">Proline--tRNA ligase</fullName>
        <ecNumber evidence="1">6.1.1.15</ecNumber>
    </recommendedName>
    <alternativeName>
        <fullName evidence="1">Prolyl-tRNA synthetase</fullName>
        <shortName evidence="1">ProRS</shortName>
    </alternativeName>
</protein>